<keyword id="KW-0028">Amino-acid biosynthesis</keyword>
<keyword id="KW-0368">Histidine biosynthesis</keyword>
<keyword id="KW-0479">Metal-binding</keyword>
<keyword id="KW-0520">NAD</keyword>
<keyword id="KW-0560">Oxidoreductase</keyword>
<keyword id="KW-0862">Zinc</keyword>
<organism>
    <name type="scientific">Colwellia psychrerythraea (strain 34H / ATCC BAA-681)</name>
    <name type="common">Vibrio psychroerythus</name>
    <dbReference type="NCBI Taxonomy" id="167879"/>
    <lineage>
        <taxon>Bacteria</taxon>
        <taxon>Pseudomonadati</taxon>
        <taxon>Pseudomonadota</taxon>
        <taxon>Gammaproteobacteria</taxon>
        <taxon>Alteromonadales</taxon>
        <taxon>Colwelliaceae</taxon>
        <taxon>Colwellia</taxon>
    </lineage>
</organism>
<dbReference type="EC" id="1.1.1.23" evidence="1"/>
<dbReference type="EMBL" id="CP000083">
    <property type="protein sequence ID" value="AAZ27302.1"/>
    <property type="molecule type" value="Genomic_DNA"/>
</dbReference>
<dbReference type="RefSeq" id="WP_011044638.1">
    <property type="nucleotide sequence ID" value="NC_003910.7"/>
</dbReference>
<dbReference type="SMR" id="Q47XB8"/>
<dbReference type="STRING" id="167879.CPS_3890"/>
<dbReference type="KEGG" id="cps:CPS_3890"/>
<dbReference type="eggNOG" id="COG0141">
    <property type="taxonomic scope" value="Bacteria"/>
</dbReference>
<dbReference type="HOGENOM" id="CLU_006732_3_0_6"/>
<dbReference type="UniPathway" id="UPA00031">
    <property type="reaction ID" value="UER00014"/>
</dbReference>
<dbReference type="Proteomes" id="UP000000547">
    <property type="component" value="Chromosome"/>
</dbReference>
<dbReference type="GO" id="GO:0005829">
    <property type="term" value="C:cytosol"/>
    <property type="evidence" value="ECO:0007669"/>
    <property type="project" value="TreeGrafter"/>
</dbReference>
<dbReference type="GO" id="GO:0004399">
    <property type="term" value="F:histidinol dehydrogenase activity"/>
    <property type="evidence" value="ECO:0007669"/>
    <property type="project" value="UniProtKB-UniRule"/>
</dbReference>
<dbReference type="GO" id="GO:0051287">
    <property type="term" value="F:NAD binding"/>
    <property type="evidence" value="ECO:0007669"/>
    <property type="project" value="InterPro"/>
</dbReference>
<dbReference type="GO" id="GO:0008270">
    <property type="term" value="F:zinc ion binding"/>
    <property type="evidence" value="ECO:0007669"/>
    <property type="project" value="UniProtKB-UniRule"/>
</dbReference>
<dbReference type="GO" id="GO:0000105">
    <property type="term" value="P:L-histidine biosynthetic process"/>
    <property type="evidence" value="ECO:0007669"/>
    <property type="project" value="UniProtKB-UniRule"/>
</dbReference>
<dbReference type="CDD" id="cd06572">
    <property type="entry name" value="Histidinol_dh"/>
    <property type="match status" value="1"/>
</dbReference>
<dbReference type="FunFam" id="1.20.5.1300:FF:000001">
    <property type="entry name" value="Histidine biosynthesis trifunctional protein"/>
    <property type="match status" value="1"/>
</dbReference>
<dbReference type="FunFam" id="3.40.50.1980:FF:000001">
    <property type="entry name" value="Histidinol dehydrogenase"/>
    <property type="match status" value="1"/>
</dbReference>
<dbReference type="FunFam" id="3.40.50.1980:FF:000002">
    <property type="entry name" value="Histidinol dehydrogenase, chloroplastic"/>
    <property type="match status" value="1"/>
</dbReference>
<dbReference type="Gene3D" id="1.20.5.1300">
    <property type="match status" value="1"/>
</dbReference>
<dbReference type="Gene3D" id="3.40.50.1980">
    <property type="entry name" value="Nitrogenase molybdenum iron protein domain"/>
    <property type="match status" value="2"/>
</dbReference>
<dbReference type="HAMAP" id="MF_01024">
    <property type="entry name" value="HisD"/>
    <property type="match status" value="1"/>
</dbReference>
<dbReference type="InterPro" id="IPR016161">
    <property type="entry name" value="Ald_DH/histidinol_DH"/>
</dbReference>
<dbReference type="InterPro" id="IPR001692">
    <property type="entry name" value="Histidinol_DH_CS"/>
</dbReference>
<dbReference type="InterPro" id="IPR022695">
    <property type="entry name" value="Histidinol_DH_monofunct"/>
</dbReference>
<dbReference type="InterPro" id="IPR012131">
    <property type="entry name" value="Hstdl_DH"/>
</dbReference>
<dbReference type="NCBIfam" id="TIGR00069">
    <property type="entry name" value="hisD"/>
    <property type="match status" value="1"/>
</dbReference>
<dbReference type="PANTHER" id="PTHR21256:SF2">
    <property type="entry name" value="HISTIDINE BIOSYNTHESIS TRIFUNCTIONAL PROTEIN"/>
    <property type="match status" value="1"/>
</dbReference>
<dbReference type="PANTHER" id="PTHR21256">
    <property type="entry name" value="HISTIDINOL DEHYDROGENASE HDH"/>
    <property type="match status" value="1"/>
</dbReference>
<dbReference type="Pfam" id="PF00815">
    <property type="entry name" value="Histidinol_dh"/>
    <property type="match status" value="1"/>
</dbReference>
<dbReference type="PIRSF" id="PIRSF000099">
    <property type="entry name" value="Histidinol_dh"/>
    <property type="match status" value="1"/>
</dbReference>
<dbReference type="PRINTS" id="PR00083">
    <property type="entry name" value="HOLDHDRGNASE"/>
</dbReference>
<dbReference type="SUPFAM" id="SSF53720">
    <property type="entry name" value="ALDH-like"/>
    <property type="match status" value="1"/>
</dbReference>
<dbReference type="PROSITE" id="PS00611">
    <property type="entry name" value="HISOL_DEHYDROGENASE"/>
    <property type="match status" value="1"/>
</dbReference>
<proteinExistence type="inferred from homology"/>
<reference key="1">
    <citation type="journal article" date="2005" name="Proc. Natl. Acad. Sci. U.S.A.">
        <title>The psychrophilic lifestyle as revealed by the genome sequence of Colwellia psychrerythraea 34H through genomic and proteomic analyses.</title>
        <authorList>
            <person name="Methe B.A."/>
            <person name="Nelson K.E."/>
            <person name="Deming J.W."/>
            <person name="Momen B."/>
            <person name="Melamud E."/>
            <person name="Zhang X."/>
            <person name="Moult J."/>
            <person name="Madupu R."/>
            <person name="Nelson W.C."/>
            <person name="Dodson R.J."/>
            <person name="Brinkac L.M."/>
            <person name="Daugherty S.C."/>
            <person name="Durkin A.S."/>
            <person name="DeBoy R.T."/>
            <person name="Kolonay J.F."/>
            <person name="Sullivan S.A."/>
            <person name="Zhou L."/>
            <person name="Davidsen T.M."/>
            <person name="Wu M."/>
            <person name="Huston A.L."/>
            <person name="Lewis M."/>
            <person name="Weaver B."/>
            <person name="Weidman J.F."/>
            <person name="Khouri H."/>
            <person name="Utterback T.R."/>
            <person name="Feldblyum T.V."/>
            <person name="Fraser C.M."/>
        </authorList>
    </citation>
    <scope>NUCLEOTIDE SEQUENCE [LARGE SCALE GENOMIC DNA]</scope>
    <source>
        <strain>34H / ATCC BAA-681</strain>
    </source>
</reference>
<comment type="function">
    <text evidence="1">Catalyzes the sequential NAD-dependent oxidations of L-histidinol to L-histidinaldehyde and then to L-histidine.</text>
</comment>
<comment type="catalytic activity">
    <reaction evidence="1">
        <text>L-histidinol + 2 NAD(+) + H2O = L-histidine + 2 NADH + 3 H(+)</text>
        <dbReference type="Rhea" id="RHEA:20641"/>
        <dbReference type="ChEBI" id="CHEBI:15377"/>
        <dbReference type="ChEBI" id="CHEBI:15378"/>
        <dbReference type="ChEBI" id="CHEBI:57540"/>
        <dbReference type="ChEBI" id="CHEBI:57595"/>
        <dbReference type="ChEBI" id="CHEBI:57699"/>
        <dbReference type="ChEBI" id="CHEBI:57945"/>
        <dbReference type="EC" id="1.1.1.23"/>
    </reaction>
</comment>
<comment type="cofactor">
    <cofactor evidence="1">
        <name>Zn(2+)</name>
        <dbReference type="ChEBI" id="CHEBI:29105"/>
    </cofactor>
    <text evidence="1">Binds 1 zinc ion per subunit.</text>
</comment>
<comment type="pathway">
    <text evidence="1">Amino-acid biosynthesis; L-histidine biosynthesis; L-histidine from 5-phospho-alpha-D-ribose 1-diphosphate: step 9/9.</text>
</comment>
<comment type="similarity">
    <text evidence="1">Belongs to the histidinol dehydrogenase family.</text>
</comment>
<name>HISX_COLP3</name>
<protein>
    <recommendedName>
        <fullName evidence="1">Histidinol dehydrogenase</fullName>
        <shortName evidence="1">HDH</shortName>
        <ecNumber evidence="1">1.1.1.23</ecNumber>
    </recommendedName>
</protein>
<feature type="chain" id="PRO_0000135757" description="Histidinol dehydrogenase">
    <location>
        <begin position="1"/>
        <end position="434"/>
    </location>
</feature>
<feature type="active site" description="Proton acceptor" evidence="1">
    <location>
        <position position="329"/>
    </location>
</feature>
<feature type="active site" description="Proton acceptor" evidence="1">
    <location>
        <position position="330"/>
    </location>
</feature>
<feature type="binding site" evidence="1">
    <location>
        <position position="129"/>
    </location>
    <ligand>
        <name>NAD(+)</name>
        <dbReference type="ChEBI" id="CHEBI:57540"/>
    </ligand>
</feature>
<feature type="binding site" evidence="1">
    <location>
        <position position="191"/>
    </location>
    <ligand>
        <name>NAD(+)</name>
        <dbReference type="ChEBI" id="CHEBI:57540"/>
    </ligand>
</feature>
<feature type="binding site" evidence="1">
    <location>
        <position position="214"/>
    </location>
    <ligand>
        <name>NAD(+)</name>
        <dbReference type="ChEBI" id="CHEBI:57540"/>
    </ligand>
</feature>
<feature type="binding site" evidence="1">
    <location>
        <position position="240"/>
    </location>
    <ligand>
        <name>substrate</name>
    </ligand>
</feature>
<feature type="binding site" evidence="1">
    <location>
        <position position="262"/>
    </location>
    <ligand>
        <name>substrate</name>
    </ligand>
</feature>
<feature type="binding site" evidence="1">
    <location>
        <position position="262"/>
    </location>
    <ligand>
        <name>Zn(2+)</name>
        <dbReference type="ChEBI" id="CHEBI:29105"/>
    </ligand>
</feature>
<feature type="binding site" evidence="1">
    <location>
        <position position="265"/>
    </location>
    <ligand>
        <name>substrate</name>
    </ligand>
</feature>
<feature type="binding site" evidence="1">
    <location>
        <position position="265"/>
    </location>
    <ligand>
        <name>Zn(2+)</name>
        <dbReference type="ChEBI" id="CHEBI:29105"/>
    </ligand>
</feature>
<feature type="binding site" evidence="1">
    <location>
        <position position="330"/>
    </location>
    <ligand>
        <name>substrate</name>
    </ligand>
</feature>
<feature type="binding site" evidence="1">
    <location>
        <position position="363"/>
    </location>
    <ligand>
        <name>substrate</name>
    </ligand>
</feature>
<feature type="binding site" evidence="1">
    <location>
        <position position="363"/>
    </location>
    <ligand>
        <name>Zn(2+)</name>
        <dbReference type="ChEBI" id="CHEBI:29105"/>
    </ligand>
</feature>
<feature type="binding site" evidence="1">
    <location>
        <position position="417"/>
    </location>
    <ligand>
        <name>substrate</name>
    </ligand>
</feature>
<feature type="binding site" evidence="1">
    <location>
        <position position="422"/>
    </location>
    <ligand>
        <name>substrate</name>
    </ligand>
</feature>
<feature type="binding site" evidence="1">
    <location>
        <position position="422"/>
    </location>
    <ligand>
        <name>Zn(2+)</name>
        <dbReference type="ChEBI" id="CHEBI:29105"/>
    </ligand>
</feature>
<accession>Q47XB8</accession>
<sequence>MINQLINWQELSPQQKNSALARPAIADSALLSTQVANILSQVKNQGDKAILALTEQFDGIALSTLSVSSAQVAQAKLALTDKRLKAIHTAYKQIKSFHSAQTASDITVETTPGVKCTLKTEAIESVGLYIPAGSAPLPSTVLMLGVPAQLTGCQRTVLVCPPDKNGQLADEILVAADLCGITEIYTVGGAQAIAALAYGTETIPAVNKVFGPGNRYVTEAKTQLSQQVAGFAIDMPAGPSEVLVIADGQANPAFIAADLLSQAEHGVDSQVILLSDSESLISKVSTEIAQQLTLLSRCKIAEQALKQSRLILTKDLAQAVEVSNEYGPEHLIIQTEDAPTLLSKLRNAGSIFVGAYTPESAGDYASGTNHVLPTYGYSKVISSLSLADFSRRFTVQEITKAGLQSLAECIIELTDAEGLDAHQRAVTIRLEEGS</sequence>
<gene>
    <name evidence="1" type="primary">hisD</name>
    <name type="ordered locus">CPS_3890</name>
</gene>
<evidence type="ECO:0000255" key="1">
    <source>
        <dbReference type="HAMAP-Rule" id="MF_01024"/>
    </source>
</evidence>